<reference key="1">
    <citation type="journal article" date="1997" name="DNA Res.">
        <title>Construction of a contiguous 874-kb sequence of the Escherichia coli-K12 genome corresponding to 50.0-68.8 min on the linkage map and analysis of its sequence features.</title>
        <authorList>
            <person name="Yamamoto Y."/>
            <person name="Aiba H."/>
            <person name="Baba T."/>
            <person name="Hayashi K."/>
            <person name="Inada T."/>
            <person name="Isono K."/>
            <person name="Itoh T."/>
            <person name="Kimura S."/>
            <person name="Kitagawa M."/>
            <person name="Makino K."/>
            <person name="Miki T."/>
            <person name="Mitsuhashi N."/>
            <person name="Mizobuchi K."/>
            <person name="Mori H."/>
            <person name="Nakade S."/>
            <person name="Nakamura Y."/>
            <person name="Nashimoto H."/>
            <person name="Oshima T."/>
            <person name="Oyama S."/>
            <person name="Saito N."/>
            <person name="Sampei G."/>
            <person name="Satoh Y."/>
            <person name="Sivasundaram S."/>
            <person name="Tagami H."/>
            <person name="Takahashi H."/>
            <person name="Takeda J."/>
            <person name="Takemoto K."/>
            <person name="Uehara K."/>
            <person name="Wada C."/>
            <person name="Yamagata S."/>
            <person name="Horiuchi T."/>
        </authorList>
    </citation>
    <scope>NUCLEOTIDE SEQUENCE [LARGE SCALE GENOMIC DNA]</scope>
    <source>
        <strain>K12 / W3110 / ATCC 27325 / DSM 5911</strain>
    </source>
</reference>
<reference key="2">
    <citation type="journal article" date="1997" name="Science">
        <title>The complete genome sequence of Escherichia coli K-12.</title>
        <authorList>
            <person name="Blattner F.R."/>
            <person name="Plunkett G. III"/>
            <person name="Bloch C.A."/>
            <person name="Perna N.T."/>
            <person name="Burland V."/>
            <person name="Riley M."/>
            <person name="Collado-Vides J."/>
            <person name="Glasner J.D."/>
            <person name="Rode C.K."/>
            <person name="Mayhew G.F."/>
            <person name="Gregor J."/>
            <person name="Davis N.W."/>
            <person name="Kirkpatrick H.A."/>
            <person name="Goeden M.A."/>
            <person name="Rose D.J."/>
            <person name="Mau B."/>
            <person name="Shao Y."/>
        </authorList>
    </citation>
    <scope>NUCLEOTIDE SEQUENCE [LARGE SCALE GENOMIC DNA]</scope>
    <source>
        <strain>K12 / MG1655 / ATCC 47076</strain>
    </source>
</reference>
<reference key="3">
    <citation type="journal article" date="2006" name="Mol. Syst. Biol.">
        <title>Highly accurate genome sequences of Escherichia coli K-12 strains MG1655 and W3110.</title>
        <authorList>
            <person name="Hayashi K."/>
            <person name="Morooka N."/>
            <person name="Yamamoto Y."/>
            <person name="Fujita K."/>
            <person name="Isono K."/>
            <person name="Choi S."/>
            <person name="Ohtsubo E."/>
            <person name="Baba T."/>
            <person name="Wanner B.L."/>
            <person name="Mori H."/>
            <person name="Horiuchi T."/>
        </authorList>
    </citation>
    <scope>NUCLEOTIDE SEQUENCE [LARGE SCALE GENOMIC DNA]</scope>
    <source>
        <strain>K12 / W3110 / ATCC 27325 / DSM 5911</strain>
    </source>
</reference>
<reference key="4">
    <citation type="journal article" date="1990" name="J. Mol. Biol.">
        <title>Precise mapping and comparison of two evolutionarily related regions of the Escherichia coli K-12 chromosome. Evolution of valU and lysT from an ancestral tRNA operon.</title>
        <authorList>
            <person name="Brun Y.V."/>
            <person name="Breton R."/>
            <person name="Lanouette P."/>
            <person name="Lapointe J."/>
        </authorList>
    </citation>
    <scope>NUCLEOTIDE SEQUENCE [GENOMIC DNA] OF 1-153</scope>
    <source>
        <strain>K12</strain>
    </source>
</reference>
<reference key="5">
    <citation type="journal article" date="2009" name="Microbiology">
        <title>Gene expression patterns and differential input into curli fimbriae regulation of all GGDEF/EAL domain proteins in Escherichia coli.</title>
        <authorList>
            <person name="Sommerfeldt N."/>
            <person name="Possling A."/>
            <person name="Becker G."/>
            <person name="Pesavento C."/>
            <person name="Tschowri N."/>
            <person name="Hengge R."/>
        </authorList>
    </citation>
    <scope>INDUCTION</scope>
    <scope>RPOS-REPRESSION</scope>
    <source>
        <strain>K12 / W3110 / ATCC 27325 / DSM 5911</strain>
    </source>
</reference>
<reference key="6">
    <citation type="journal article" date="2015" name="J. Bacteriol.">
        <title>Systematic nomenclature for GGDEF and EAL domain-containing cyclic di-GMP turnover proteins of Escherichia coli.</title>
        <authorList>
            <person name="Hengge R."/>
            <person name="Galperin M.Y."/>
            <person name="Ghigo J.M."/>
            <person name="Gomelsky M."/>
            <person name="Green J."/>
            <person name="Hughes K.T."/>
            <person name="Jenal U."/>
            <person name="Landini P."/>
        </authorList>
    </citation>
    <scope>NOMENCLATURE</scope>
</reference>
<accession>P23842</accession>
<accession>P76529</accession>
<accession>P76954</accession>
<name>PDEA_ECOLI</name>
<comment type="function">
    <text evidence="1">Phosphodiesterase (PDE) that catalyzes the hydrolysis of cyclic-di-GMP (c-di-GMP) to 5'-pGpG.</text>
</comment>
<comment type="catalytic activity">
    <reaction evidence="1">
        <text>3',3'-c-di-GMP + H2O = 5'-phosphoguanylyl(3'-&gt;5')guanosine + H(+)</text>
        <dbReference type="Rhea" id="RHEA:24902"/>
        <dbReference type="ChEBI" id="CHEBI:15377"/>
        <dbReference type="ChEBI" id="CHEBI:15378"/>
        <dbReference type="ChEBI" id="CHEBI:58754"/>
        <dbReference type="ChEBI" id="CHEBI:58805"/>
        <dbReference type="EC" id="3.1.4.52"/>
    </reaction>
</comment>
<comment type="subcellular location">
    <subcellularLocation>
        <location evidence="7">Cell membrane</location>
        <topology evidence="2">Multi-pass membrane protein</topology>
    </subcellularLocation>
</comment>
<comment type="induction">
    <text evidence="5">Expressed during exponential and post-exponential growth at both 28 and 37 degrees Celsius. Repressed by RpoS.</text>
</comment>
<comment type="sequence caution" evidence="7">
    <conflict type="erroneous initiation">
        <sequence resource="EMBL-CDS" id="AAA65719"/>
    </conflict>
    <text>Extended N-terminus.</text>
</comment>
<comment type="sequence caution" evidence="7">
    <conflict type="frameshift">
        <sequence resource="EMBL-CDS" id="AAA65719"/>
    </conflict>
</comment>
<comment type="sequence caution" evidence="7">
    <conflict type="erroneous initiation">
        <sequence resource="EMBL-CDS" id="CAA45395"/>
    </conflict>
    <text>Extended N-terminus.</text>
</comment>
<comment type="sequence caution" evidence="7">
    <conflict type="frameshift">
        <sequence resource="EMBL-CDS" id="CAA45395"/>
    </conflict>
</comment>
<organism>
    <name type="scientific">Escherichia coli (strain K12)</name>
    <dbReference type="NCBI Taxonomy" id="83333"/>
    <lineage>
        <taxon>Bacteria</taxon>
        <taxon>Pseudomonadati</taxon>
        <taxon>Pseudomonadota</taxon>
        <taxon>Gammaproteobacteria</taxon>
        <taxon>Enterobacterales</taxon>
        <taxon>Enterobacteriaceae</taxon>
        <taxon>Escherichia</taxon>
    </lineage>
</organism>
<feature type="chain" id="PRO_0000169216" description="Probable cyclic di-GMP phosphodiesterase PdeA">
    <location>
        <begin position="1"/>
        <end position="729"/>
    </location>
</feature>
<feature type="transmembrane region" description="Helical" evidence="2">
    <location>
        <begin position="17"/>
        <end position="37"/>
    </location>
</feature>
<feature type="transmembrane region" description="Helical" evidence="2">
    <location>
        <begin position="41"/>
        <end position="61"/>
    </location>
</feature>
<feature type="transmembrane region" description="Helical" evidence="2">
    <location>
        <begin position="83"/>
        <end position="103"/>
    </location>
</feature>
<feature type="transmembrane region" description="Helical" evidence="2">
    <location>
        <begin position="126"/>
        <end position="146"/>
    </location>
</feature>
<feature type="transmembrane region" description="Helical" evidence="2">
    <location>
        <begin position="163"/>
        <end position="183"/>
    </location>
</feature>
<feature type="transmembrane region" description="Helical" evidence="2">
    <location>
        <begin position="214"/>
        <end position="234"/>
    </location>
</feature>
<feature type="transmembrane region" description="Helical" evidence="2">
    <location>
        <begin position="238"/>
        <end position="258"/>
    </location>
</feature>
<feature type="transmembrane region" description="Helical" evidence="2">
    <location>
        <begin position="289"/>
        <end position="309"/>
    </location>
</feature>
<feature type="domain" description="GGDEF" evidence="4">
    <location>
        <begin position="348"/>
        <end position="476"/>
    </location>
</feature>
<feature type="domain" description="EAL" evidence="3">
    <location>
        <begin position="488"/>
        <end position="729"/>
    </location>
</feature>
<protein>
    <recommendedName>
        <fullName evidence="7">Probable cyclic di-GMP phosphodiesterase PdeA</fullName>
        <ecNumber evidence="1">3.1.4.52</ecNumber>
    </recommendedName>
</protein>
<dbReference type="EC" id="3.1.4.52" evidence="1"/>
<dbReference type="EMBL" id="U00096">
    <property type="protein sequence ID" value="AAC75454.2"/>
    <property type="molecule type" value="Genomic_DNA"/>
</dbReference>
<dbReference type="EMBL" id="AP009048">
    <property type="protein sequence ID" value="BAA16267.2"/>
    <property type="molecule type" value="Genomic_DNA"/>
</dbReference>
<dbReference type="EMBL" id="M13687">
    <property type="protein sequence ID" value="AAA65719.1"/>
    <property type="status" value="ALT_SEQ"/>
    <property type="molecule type" value="Genomic_DNA"/>
</dbReference>
<dbReference type="EMBL" id="X63976">
    <property type="protein sequence ID" value="CAA45395.1"/>
    <property type="status" value="ALT_SEQ"/>
    <property type="molecule type" value="Genomic_DNA"/>
</dbReference>
<dbReference type="PIR" id="H65013">
    <property type="entry name" value="H65013"/>
</dbReference>
<dbReference type="PIR" id="S11411">
    <property type="entry name" value="S11411"/>
</dbReference>
<dbReference type="RefSeq" id="NP_416896.4">
    <property type="nucleotide sequence ID" value="NC_000913.3"/>
</dbReference>
<dbReference type="RefSeq" id="WP_000497400.1">
    <property type="nucleotide sequence ID" value="NZ_LN832404.1"/>
</dbReference>
<dbReference type="SMR" id="P23842"/>
<dbReference type="BioGRID" id="4259186">
    <property type="interactions" value="206"/>
</dbReference>
<dbReference type="DIP" id="DIP-12011N"/>
<dbReference type="FunCoup" id="P23842">
    <property type="interactions" value="27"/>
</dbReference>
<dbReference type="IntAct" id="P23842">
    <property type="interactions" value="1"/>
</dbReference>
<dbReference type="STRING" id="511145.b2395"/>
<dbReference type="jPOST" id="P23842"/>
<dbReference type="PaxDb" id="511145-b2395"/>
<dbReference type="EnsemblBacteria" id="AAC75454">
    <property type="protein sequence ID" value="AAC75454"/>
    <property type="gene ID" value="b2395"/>
</dbReference>
<dbReference type="GeneID" id="946864"/>
<dbReference type="KEGG" id="ecj:JW5391"/>
<dbReference type="KEGG" id="eco:b2395"/>
<dbReference type="KEGG" id="ecoc:C3026_13310"/>
<dbReference type="PATRIC" id="fig|1411691.4.peg.4333"/>
<dbReference type="EchoBASE" id="EB1135"/>
<dbReference type="eggNOG" id="COG2199">
    <property type="taxonomic scope" value="Bacteria"/>
</dbReference>
<dbReference type="eggNOG" id="COG2200">
    <property type="taxonomic scope" value="Bacteria"/>
</dbReference>
<dbReference type="HOGENOM" id="CLU_023566_2_0_6"/>
<dbReference type="InParanoid" id="P23842"/>
<dbReference type="OMA" id="IRIFWRR"/>
<dbReference type="OrthoDB" id="5900110at2"/>
<dbReference type="PhylomeDB" id="P23842"/>
<dbReference type="BioCyc" id="EcoCyc:EG11145-MONOMER"/>
<dbReference type="PRO" id="PR:P23842"/>
<dbReference type="Proteomes" id="UP000000625">
    <property type="component" value="Chromosome"/>
</dbReference>
<dbReference type="GO" id="GO:0005886">
    <property type="term" value="C:plasma membrane"/>
    <property type="evidence" value="ECO:0000314"/>
    <property type="project" value="EcoCyc"/>
</dbReference>
<dbReference type="GO" id="GO:0071111">
    <property type="term" value="F:cyclic-guanylate-specific phosphodiesterase activity"/>
    <property type="evidence" value="ECO:0000316"/>
    <property type="project" value="EcoCyc"/>
</dbReference>
<dbReference type="GO" id="GO:1900190">
    <property type="term" value="P:regulation of single-species biofilm formation"/>
    <property type="evidence" value="ECO:0000318"/>
    <property type="project" value="GO_Central"/>
</dbReference>
<dbReference type="CDD" id="cd01948">
    <property type="entry name" value="EAL"/>
    <property type="match status" value="1"/>
</dbReference>
<dbReference type="Gene3D" id="3.30.70.270">
    <property type="match status" value="1"/>
</dbReference>
<dbReference type="Gene3D" id="3.20.20.450">
    <property type="entry name" value="EAL domain"/>
    <property type="match status" value="1"/>
</dbReference>
<dbReference type="InterPro" id="IPR050706">
    <property type="entry name" value="Cyclic-di-GMP_PDE-like"/>
</dbReference>
<dbReference type="InterPro" id="IPR001633">
    <property type="entry name" value="EAL_dom"/>
</dbReference>
<dbReference type="InterPro" id="IPR035919">
    <property type="entry name" value="EAL_sf"/>
</dbReference>
<dbReference type="InterPro" id="IPR000160">
    <property type="entry name" value="GGDEF_dom"/>
</dbReference>
<dbReference type="InterPro" id="IPR007895">
    <property type="entry name" value="MASE1"/>
</dbReference>
<dbReference type="InterPro" id="IPR029787">
    <property type="entry name" value="Nucleotide_cyclase"/>
</dbReference>
<dbReference type="InterPro" id="IPR043128">
    <property type="entry name" value="Rev_trsase/Diguanyl_cyclase"/>
</dbReference>
<dbReference type="PANTHER" id="PTHR33121:SF74">
    <property type="entry name" value="CYCLIC DI-GMP PHOSPHODIESTERASE PDEA-RELATED"/>
    <property type="match status" value="1"/>
</dbReference>
<dbReference type="PANTHER" id="PTHR33121">
    <property type="entry name" value="CYCLIC DI-GMP PHOSPHODIESTERASE PDEF"/>
    <property type="match status" value="1"/>
</dbReference>
<dbReference type="Pfam" id="PF00563">
    <property type="entry name" value="EAL"/>
    <property type="match status" value="1"/>
</dbReference>
<dbReference type="Pfam" id="PF05231">
    <property type="entry name" value="MASE1"/>
    <property type="match status" value="1"/>
</dbReference>
<dbReference type="SMART" id="SM00052">
    <property type="entry name" value="EAL"/>
    <property type="match status" value="1"/>
</dbReference>
<dbReference type="SMART" id="SM00267">
    <property type="entry name" value="GGDEF"/>
    <property type="match status" value="1"/>
</dbReference>
<dbReference type="SUPFAM" id="SSF141868">
    <property type="entry name" value="EAL domain-like"/>
    <property type="match status" value="1"/>
</dbReference>
<dbReference type="SUPFAM" id="SSF55073">
    <property type="entry name" value="Nucleotide cyclase"/>
    <property type="match status" value="1"/>
</dbReference>
<dbReference type="PROSITE" id="PS50883">
    <property type="entry name" value="EAL"/>
    <property type="match status" value="1"/>
</dbReference>
<dbReference type="PROSITE" id="PS50887">
    <property type="entry name" value="GGDEF"/>
    <property type="match status" value="1"/>
</dbReference>
<keyword id="KW-0973">c-di-GMP</keyword>
<keyword id="KW-1003">Cell membrane</keyword>
<keyword id="KW-0378">Hydrolase</keyword>
<keyword id="KW-0472">Membrane</keyword>
<keyword id="KW-1185">Reference proteome</keyword>
<keyword id="KW-0812">Transmembrane</keyword>
<keyword id="KW-1133">Transmembrane helix</keyword>
<evidence type="ECO:0000250" key="1">
    <source>
        <dbReference type="UniProtKB" id="P21514"/>
    </source>
</evidence>
<evidence type="ECO:0000255" key="2"/>
<evidence type="ECO:0000255" key="3">
    <source>
        <dbReference type="PROSITE-ProRule" id="PRU00074"/>
    </source>
</evidence>
<evidence type="ECO:0000255" key="4">
    <source>
        <dbReference type="PROSITE-ProRule" id="PRU00095"/>
    </source>
</evidence>
<evidence type="ECO:0000269" key="5">
    <source>
    </source>
</evidence>
<evidence type="ECO:0000303" key="6">
    <source>
    </source>
</evidence>
<evidence type="ECO:0000305" key="7"/>
<sequence>MFVEHNLIKNIKIFTLAFTLTVVLIQLSRFISPLAIIHSSYIFLAWMPLCVMLSILFIFGWRGVVPVLCGMFCTNLWNFHLSFLQTAVMLGSQTFVVLCACAILRWQLGTRWRYGLTSRYVWQRLFWLGLVTPIGIKCSMYLVGSFFDFPLKISTFFGDADAIFTVVDLLSLFTAVLIYNMLFYYLTRMIVSPHFAQILWRRDIAPSLGKEKRAFTLSWLAALSVLLLLLCTPYENDFIAGYLVPVFFIIFTLGVGKLRYPFLNLTWAVSTLCLLNYNQNFLQGVETEYSLAFILAVLISFSVCLLYMVRIYHRSEWLNRRWHLQALTDPLTLLPNFRALEQAPEQEAGKSFCCLRIDNLEFMSRHYGLMMRVHCIRSICRTLLPLMQENEKLYQLPGSELLLVLSGPETEGRLQHMVNILNSRQIHWNNTGLDMGYGAAWGRFDGNQETLQPLLGQLSWLAEQSCAHHHVLALDSREEMVSGQTTKQVLLLNTIRTALDQGDLLLYAQPIRNKEGEGYDEILARLKYDGGIMTPDKFLPLIAQFNLSARFDLQVLESLLKWLATHPCDKKGPRFSVNLMPLTLLQKNIAGRIIRLFKRYHISPQAVILEITEEQAFSNAESSMYNIEQLHKFGFRIAIDDFGTGYANYERLKRLQADIIKIDGVFVKDIVTNTLDAMIVRSITDLAKAKSLSVVAEFVETQQQQALLHKLGVQYLQGYLIGRPQPLAD</sequence>
<gene>
    <name evidence="6" type="primary">pdeA</name>
    <name type="synonym">yfeA</name>
    <name type="ordered locus">b2395</name>
    <name type="ordered locus">JW5391</name>
</gene>
<proteinExistence type="evidence at transcript level"/>